<comment type="function">
    <text>Tubulin is the major constituent of microtubules, a cylinder consisting of laterally associated linear protofilaments composed of alpha- and beta-tubulin heterodimers. Microtubules grow by the addition of GTP-tubulin dimers to the microtubule end, where a stabilizing cap forms. Below the cap, tubulin dimers are in GDP-bound state, owing to GTPase activity of alpha-tubulin.</text>
</comment>
<comment type="cofactor">
    <cofactor evidence="1">
        <name>Mg(2+)</name>
        <dbReference type="ChEBI" id="CHEBI:18420"/>
    </cofactor>
</comment>
<comment type="subunit">
    <text>Dimer of alpha and beta chains. A typical microtubule is a hollow water-filled tube with an outer diameter of 25 nm and an inner diameter of 15 nM. Alpha-beta heterodimers associate head-to-tail to form protofilaments running lengthwise along the microtubule wall with the beta-tubulin subunit facing the microtubule plus end conferring a structural polarity. Microtubules usually have 13 protofilaments but different protofilament numbers can be found in some organisms and specialized cells.</text>
</comment>
<comment type="subcellular location">
    <subcellularLocation>
        <location>Cytoplasm</location>
        <location>Cytoskeleton</location>
    </subcellularLocation>
</comment>
<comment type="similarity">
    <text evidence="3">Belongs to the tubulin family.</text>
</comment>
<evidence type="ECO:0000250" key="1">
    <source>
        <dbReference type="UniProtKB" id="P68363"/>
    </source>
</evidence>
<evidence type="ECO:0000250" key="2">
    <source>
        <dbReference type="UniProtKB" id="Q13509"/>
    </source>
</evidence>
<evidence type="ECO:0000305" key="3"/>
<accession>Q08115</accession>
<protein>
    <recommendedName>
        <fullName>Tubulin beta chain</fullName>
    </recommendedName>
    <alternativeName>
        <fullName>Beta-tubulin</fullName>
    </alternativeName>
</protein>
<feature type="chain" id="PRO_0000048296" description="Tubulin beta chain">
    <location>
        <begin position="1"/>
        <end position="444"/>
    </location>
</feature>
<feature type="binding site" evidence="2">
    <location>
        <position position="11"/>
    </location>
    <ligand>
        <name>GTP</name>
        <dbReference type="ChEBI" id="CHEBI:37565"/>
    </ligand>
</feature>
<feature type="binding site" evidence="1">
    <location>
        <position position="69"/>
    </location>
    <ligand>
        <name>GTP</name>
        <dbReference type="ChEBI" id="CHEBI:37565"/>
    </ligand>
</feature>
<feature type="binding site" evidence="1">
    <location>
        <position position="69"/>
    </location>
    <ligand>
        <name>Mg(2+)</name>
        <dbReference type="ChEBI" id="CHEBI:18420"/>
    </ligand>
</feature>
<feature type="binding site" evidence="2">
    <location>
        <position position="138"/>
    </location>
    <ligand>
        <name>GTP</name>
        <dbReference type="ChEBI" id="CHEBI:37565"/>
    </ligand>
</feature>
<feature type="binding site" evidence="2">
    <location>
        <position position="142"/>
    </location>
    <ligand>
        <name>GTP</name>
        <dbReference type="ChEBI" id="CHEBI:37565"/>
    </ligand>
</feature>
<feature type="binding site" evidence="2">
    <location>
        <position position="143"/>
    </location>
    <ligand>
        <name>GTP</name>
        <dbReference type="ChEBI" id="CHEBI:37565"/>
    </ligand>
</feature>
<feature type="binding site" evidence="2">
    <location>
        <position position="144"/>
    </location>
    <ligand>
        <name>GTP</name>
        <dbReference type="ChEBI" id="CHEBI:37565"/>
    </ligand>
</feature>
<feature type="binding site" evidence="2">
    <location>
        <position position="204"/>
    </location>
    <ligand>
        <name>GTP</name>
        <dbReference type="ChEBI" id="CHEBI:37565"/>
    </ligand>
</feature>
<feature type="binding site" evidence="2">
    <location>
        <position position="226"/>
    </location>
    <ligand>
        <name>GTP</name>
        <dbReference type="ChEBI" id="CHEBI:37565"/>
    </ligand>
</feature>
<proteinExistence type="inferred from homology"/>
<name>TBB_EUPOC</name>
<keyword id="KW-0963">Cytoplasm</keyword>
<keyword id="KW-0206">Cytoskeleton</keyword>
<keyword id="KW-0342">GTP-binding</keyword>
<keyword id="KW-0460">Magnesium</keyword>
<keyword id="KW-0479">Metal-binding</keyword>
<keyword id="KW-0493">Microtubule</keyword>
<keyword id="KW-0547">Nucleotide-binding</keyword>
<sequence>MREIVHVQGGQCGNQIGAKFWEVISDEHGVEPTGAYHGDSDLQLERINVYYNEATGGRYVPRAVLMDLEPGTMDSVRAGPFGQLFRPDNFVFGQTGAGNNWAKGHYTEGAELIDSVLDVVRKEAEGCDCLQGFQITHSLGGGTGSGMGTLLISKIREEYPDRIMETFSVFPSPKVSDTVVEPYNATLSVHQLVENADEVMVIDNEALYDICFRTLKLTTPTYGDLNHLVSACISGVTACLRFPGQLNSDLRKLAVNLIPFPRLHFFMIGFAPLTSRGSQQYRALTVPELTQQMFDAKNMMSASDPRHGRYLTASAMFRGRMSTKEVDEQMLNVQNKNSSYFVEWIPNNIKSSVCDIPPKGLKMSSTFVGNSTAIQEMFKRVAEQFTAMFRRKAFLHWYTGEGMDEMEFTEAESNMNDLVSEYQQYQDATAEEEGEMDEEEGAME</sequence>
<dbReference type="EMBL" id="X69467">
    <property type="protein sequence ID" value="CAA49227.1"/>
    <property type="molecule type" value="Genomic_DNA"/>
</dbReference>
<dbReference type="PIR" id="S31400">
    <property type="entry name" value="S31400"/>
</dbReference>
<dbReference type="SMR" id="Q08115"/>
<dbReference type="GO" id="GO:0005737">
    <property type="term" value="C:cytoplasm"/>
    <property type="evidence" value="ECO:0007669"/>
    <property type="project" value="UniProtKB-KW"/>
</dbReference>
<dbReference type="GO" id="GO:0005874">
    <property type="term" value="C:microtubule"/>
    <property type="evidence" value="ECO:0007669"/>
    <property type="project" value="UniProtKB-KW"/>
</dbReference>
<dbReference type="GO" id="GO:0005525">
    <property type="term" value="F:GTP binding"/>
    <property type="evidence" value="ECO:0007669"/>
    <property type="project" value="UniProtKB-KW"/>
</dbReference>
<dbReference type="GO" id="GO:0003924">
    <property type="term" value="F:GTPase activity"/>
    <property type="evidence" value="ECO:0007669"/>
    <property type="project" value="InterPro"/>
</dbReference>
<dbReference type="GO" id="GO:0046872">
    <property type="term" value="F:metal ion binding"/>
    <property type="evidence" value="ECO:0007669"/>
    <property type="project" value="UniProtKB-KW"/>
</dbReference>
<dbReference type="GO" id="GO:0005200">
    <property type="term" value="F:structural constituent of cytoskeleton"/>
    <property type="evidence" value="ECO:0007669"/>
    <property type="project" value="InterPro"/>
</dbReference>
<dbReference type="GO" id="GO:0007017">
    <property type="term" value="P:microtubule-based process"/>
    <property type="evidence" value="ECO:0007669"/>
    <property type="project" value="InterPro"/>
</dbReference>
<dbReference type="CDD" id="cd02187">
    <property type="entry name" value="beta_tubulin"/>
    <property type="match status" value="1"/>
</dbReference>
<dbReference type="FunFam" id="1.10.287.600:FF:000002">
    <property type="entry name" value="Tubulin beta chain"/>
    <property type="match status" value="1"/>
</dbReference>
<dbReference type="FunFam" id="3.30.1330.20:FF:000002">
    <property type="entry name" value="Tubulin beta chain"/>
    <property type="match status" value="1"/>
</dbReference>
<dbReference type="FunFam" id="3.40.50.1440:FF:000005">
    <property type="entry name" value="Tubulin beta chain"/>
    <property type="match status" value="1"/>
</dbReference>
<dbReference type="Gene3D" id="1.10.287.600">
    <property type="entry name" value="Helix hairpin bin"/>
    <property type="match status" value="1"/>
</dbReference>
<dbReference type="Gene3D" id="3.30.1330.20">
    <property type="entry name" value="Tubulin/FtsZ, C-terminal domain"/>
    <property type="match status" value="1"/>
</dbReference>
<dbReference type="Gene3D" id="3.40.50.1440">
    <property type="entry name" value="Tubulin/FtsZ, GTPase domain"/>
    <property type="match status" value="1"/>
</dbReference>
<dbReference type="InterPro" id="IPR013838">
    <property type="entry name" value="Beta-tubulin_BS"/>
</dbReference>
<dbReference type="InterPro" id="IPR002453">
    <property type="entry name" value="Beta_tubulin"/>
</dbReference>
<dbReference type="InterPro" id="IPR008280">
    <property type="entry name" value="Tub_FtsZ_C"/>
</dbReference>
<dbReference type="InterPro" id="IPR000217">
    <property type="entry name" value="Tubulin"/>
</dbReference>
<dbReference type="InterPro" id="IPR037103">
    <property type="entry name" value="Tubulin/FtsZ-like_C"/>
</dbReference>
<dbReference type="InterPro" id="IPR018316">
    <property type="entry name" value="Tubulin/FtsZ_2-layer-sand-dom"/>
</dbReference>
<dbReference type="InterPro" id="IPR036525">
    <property type="entry name" value="Tubulin/FtsZ_GTPase_sf"/>
</dbReference>
<dbReference type="InterPro" id="IPR023123">
    <property type="entry name" value="Tubulin_C"/>
</dbReference>
<dbReference type="InterPro" id="IPR017975">
    <property type="entry name" value="Tubulin_CS"/>
</dbReference>
<dbReference type="InterPro" id="IPR003008">
    <property type="entry name" value="Tubulin_FtsZ_GTPase"/>
</dbReference>
<dbReference type="PANTHER" id="PTHR11588">
    <property type="entry name" value="TUBULIN"/>
    <property type="match status" value="1"/>
</dbReference>
<dbReference type="Pfam" id="PF00091">
    <property type="entry name" value="Tubulin"/>
    <property type="match status" value="1"/>
</dbReference>
<dbReference type="Pfam" id="PF03953">
    <property type="entry name" value="Tubulin_C"/>
    <property type="match status" value="1"/>
</dbReference>
<dbReference type="PRINTS" id="PR01163">
    <property type="entry name" value="BETATUBULIN"/>
</dbReference>
<dbReference type="PRINTS" id="PR01161">
    <property type="entry name" value="TUBULIN"/>
</dbReference>
<dbReference type="SMART" id="SM00864">
    <property type="entry name" value="Tubulin"/>
    <property type="match status" value="1"/>
</dbReference>
<dbReference type="SMART" id="SM00865">
    <property type="entry name" value="Tubulin_C"/>
    <property type="match status" value="1"/>
</dbReference>
<dbReference type="SUPFAM" id="SSF55307">
    <property type="entry name" value="Tubulin C-terminal domain-like"/>
    <property type="match status" value="1"/>
</dbReference>
<dbReference type="SUPFAM" id="SSF52490">
    <property type="entry name" value="Tubulin nucleotide-binding domain-like"/>
    <property type="match status" value="1"/>
</dbReference>
<dbReference type="PROSITE" id="PS00227">
    <property type="entry name" value="TUBULIN"/>
    <property type="match status" value="1"/>
</dbReference>
<dbReference type="PROSITE" id="PS00228">
    <property type="entry name" value="TUBULIN_B_AUTOREG"/>
    <property type="match status" value="1"/>
</dbReference>
<organism>
    <name type="scientific">Euplotoides octocarinatus</name>
    <name type="common">Freshwater ciliate</name>
    <name type="synonym">Euplotes octocarinatus</name>
    <dbReference type="NCBI Taxonomy" id="2716877"/>
    <lineage>
        <taxon>Eukaryota</taxon>
        <taxon>Sar</taxon>
        <taxon>Alveolata</taxon>
        <taxon>Ciliophora</taxon>
        <taxon>Intramacronucleata</taxon>
        <taxon>Spirotrichea</taxon>
        <taxon>Hypotrichia</taxon>
        <taxon>Euplotida</taxon>
        <taxon>Euplotidae</taxon>
        <taxon>Euplotes</taxon>
    </lineage>
</organism>
<reference key="1">
    <citation type="journal article" date="1994" name="J. Eukaryot. Microbiol.">
        <title>The alpha- and beta-tubulin genes of Euplotes octocarinatus.</title>
        <authorList>
            <person name="Liang A."/>
            <person name="Schmidt H.J."/>
            <person name="Heckmann K."/>
        </authorList>
    </citation>
    <scope>NUCLEOTIDE SEQUENCE [GENOMIC DNA]</scope>
    <source>
        <strain>3(58)-IX</strain>
    </source>
</reference>